<protein>
    <recommendedName>
        <fullName>Complement C1r-B subcomponent</fullName>
        <ecNumber evidence="1">3.4.21.41</ecNumber>
    </recommendedName>
    <alternativeName>
        <fullName>Complement component 1 subcomponent r-B</fullName>
    </alternativeName>
    <component>
        <recommendedName>
            <fullName>Complement C1r-B subcomponent heavy chain</fullName>
        </recommendedName>
    </component>
    <component>
        <recommendedName>
            <fullName>Complement C1r-B subcomponent light chain</fullName>
        </recommendedName>
    </component>
</protein>
<keyword id="KW-0068">Autocatalytic cleavage</keyword>
<keyword id="KW-0106">Calcium</keyword>
<keyword id="KW-0180">Complement pathway</keyword>
<keyword id="KW-1015">Disulfide bond</keyword>
<keyword id="KW-0245">EGF-like domain</keyword>
<keyword id="KW-0325">Glycoprotein</keyword>
<keyword id="KW-0378">Hydrolase</keyword>
<keyword id="KW-0379">Hydroxylation</keyword>
<keyword id="KW-0391">Immunity</keyword>
<keyword id="KW-0399">Innate immunity</keyword>
<keyword id="KW-0479">Metal-binding</keyword>
<keyword id="KW-0597">Phosphoprotein</keyword>
<keyword id="KW-0645">Protease</keyword>
<keyword id="KW-1185">Reference proteome</keyword>
<keyword id="KW-0677">Repeat</keyword>
<keyword id="KW-0964">Secreted</keyword>
<keyword id="KW-0720">Serine protease</keyword>
<keyword id="KW-0732">Signal</keyword>
<keyword id="KW-0768">Sushi</keyword>
<proteinExistence type="evidence at transcript level"/>
<sequence length="706" mass="79936">MWLFALLVTLFYGVEGSIYLPQKLYGEVTSPLYPKPYPSDLETTTVITVPMGYRVKLVFWQFDVEPSEGCLYDYVKISADKQTLGRFCGQLDSPLGNPPGSKEFMSQGNKMLLTFHTDFSNEENGTIMFYKGFLAYYQAVDLDECASQPNSVEEGLQPRCQHLCHNYVGGYFCSCHPGYELQKDGQSCQAECSSELYTEPSGYVSSLEYPQPYPPDLRCNYSIRVERGLTVHLKFLDPFEIDDHQQVHCPYDQLQIYANGKNLGEFCGKQRPPDLDTSSNAVDLLFFTDESGDSRGWKLHYTTETIKCPQPKALDEFTIIQDPQPQYQFRDYFTVTCKQGYQLMEGNQALLSFTAVCQHDGTWHRAMPRCKIKNCGQPQSLSNGDFRYITTKGVTTYEASIQYHCHEPYYKMLTRAGSSESMRGIYTCTAQGIWKNEEEGEKMPRCLPVCGKPVNPVTQKERIIGGQPARPGNFPWQAFTTIYGPGGGALLGDRWILTAAHTIYPKYPNKGKNTNPRTLVFLGHTNMEQIQKLGHHPVRRVIIHPDYRQEEPDNFEGDIALLELENSVTLGPELLPICLPDNETFYGQGLMGYVSGFGTTGNRIPFHLRFVRLPVADREACQRWLWTKKDTSPFSQNMFCSGDPAVQQDACQGDSGGVFAVRDRNRDIWVATGIVSWGIGCGEGYGFYTKVLNYVDWIKKEMGDEN</sequence>
<name>C1RB_MOUSE</name>
<dbReference type="EC" id="3.4.21.41" evidence="1"/>
<dbReference type="EMBL" id="AF459018">
    <property type="protein sequence ID" value="AAO15557.1"/>
    <property type="molecule type" value="mRNA"/>
</dbReference>
<dbReference type="CCDS" id="CCDS71834.1"/>
<dbReference type="RefSeq" id="NP_001106827.1">
    <property type="nucleotide sequence ID" value="NM_001113356.1"/>
</dbReference>
<dbReference type="SMR" id="Q8CFG9"/>
<dbReference type="BioGRID" id="579098">
    <property type="interactions" value="2"/>
</dbReference>
<dbReference type="ComplexPortal" id="CPX-4985">
    <property type="entry name" value="Complement C1 complex, C1rb-C1sb variant"/>
</dbReference>
<dbReference type="FunCoup" id="Q8CFG9">
    <property type="interactions" value="390"/>
</dbReference>
<dbReference type="STRING" id="10090.ENSMUSP00000139376"/>
<dbReference type="MEROPS" id="S01.209"/>
<dbReference type="GlyCosmos" id="Q8CFG9">
    <property type="glycosylation" value="3 sites, No reported glycans"/>
</dbReference>
<dbReference type="GlyGen" id="Q8CFG9">
    <property type="glycosylation" value="3 sites"/>
</dbReference>
<dbReference type="PhosphoSitePlus" id="Q8CFG9"/>
<dbReference type="CPTAC" id="non-CPTAC-3451"/>
<dbReference type="PaxDb" id="10090-ENSMUSP00000139376"/>
<dbReference type="PeptideAtlas" id="Q8CFG9"/>
<dbReference type="ProteomicsDB" id="273806"/>
<dbReference type="Pumba" id="Q8CFG9"/>
<dbReference type="Ensembl" id="ENSMUST00000184647.2">
    <property type="protein sequence ID" value="ENSMUSP00000139376.2"/>
    <property type="gene ID" value="ENSMUSG00000098470.2"/>
</dbReference>
<dbReference type="GeneID" id="667277"/>
<dbReference type="KEGG" id="mmu:667277"/>
<dbReference type="UCSC" id="uc009drd.1">
    <property type="organism name" value="mouse"/>
</dbReference>
<dbReference type="AGR" id="MGI:3779804"/>
<dbReference type="CTD" id="667277"/>
<dbReference type="MGI" id="MGI:3779804">
    <property type="gene designation" value="C1rb"/>
</dbReference>
<dbReference type="VEuPathDB" id="HostDB:ENSMUSG00000098470"/>
<dbReference type="eggNOG" id="KOG3627">
    <property type="taxonomic scope" value="Eukaryota"/>
</dbReference>
<dbReference type="GeneTree" id="ENSGT00940000158621"/>
<dbReference type="HOGENOM" id="CLU_006842_14_1_1"/>
<dbReference type="InParanoid" id="Q8CFG9"/>
<dbReference type="OMA" id="IIWFLWF"/>
<dbReference type="OrthoDB" id="6261922at2759"/>
<dbReference type="PhylomeDB" id="Q8CFG9"/>
<dbReference type="BioGRID-ORCS" id="667277">
    <property type="hits" value="0 hits in 71 CRISPR screens"/>
</dbReference>
<dbReference type="ChiTaRS" id="C1rb">
    <property type="organism name" value="mouse"/>
</dbReference>
<dbReference type="PRO" id="PR:Q8CFG9"/>
<dbReference type="Proteomes" id="UP000000589">
    <property type="component" value="Chromosome 6"/>
</dbReference>
<dbReference type="RNAct" id="Q8CFG9">
    <property type="molecule type" value="protein"/>
</dbReference>
<dbReference type="Bgee" id="ENSMUSG00000098470">
    <property type="expression patterns" value="Expressed in white adipose tissue and 19 other cell types or tissues"/>
</dbReference>
<dbReference type="GO" id="GO:0005576">
    <property type="term" value="C:extracellular region"/>
    <property type="evidence" value="ECO:0007669"/>
    <property type="project" value="InterPro"/>
</dbReference>
<dbReference type="GO" id="GO:0005509">
    <property type="term" value="F:calcium ion binding"/>
    <property type="evidence" value="ECO:0007669"/>
    <property type="project" value="InterPro"/>
</dbReference>
<dbReference type="GO" id="GO:0004252">
    <property type="term" value="F:serine-type endopeptidase activity"/>
    <property type="evidence" value="ECO:0007669"/>
    <property type="project" value="UniProtKB-EC"/>
</dbReference>
<dbReference type="GO" id="GO:0006958">
    <property type="term" value="P:complement activation, classical pathway"/>
    <property type="evidence" value="ECO:0007669"/>
    <property type="project" value="UniProtKB-KW"/>
</dbReference>
<dbReference type="GO" id="GO:0045087">
    <property type="term" value="P:innate immune response"/>
    <property type="evidence" value="ECO:0007669"/>
    <property type="project" value="UniProtKB-KW"/>
</dbReference>
<dbReference type="GO" id="GO:0006508">
    <property type="term" value="P:proteolysis"/>
    <property type="evidence" value="ECO:0007669"/>
    <property type="project" value="UniProtKB-KW"/>
</dbReference>
<dbReference type="CDD" id="cd00033">
    <property type="entry name" value="CCP"/>
    <property type="match status" value="2"/>
</dbReference>
<dbReference type="CDD" id="cd00041">
    <property type="entry name" value="CUB"/>
    <property type="match status" value="2"/>
</dbReference>
<dbReference type="CDD" id="cd00054">
    <property type="entry name" value="EGF_CA"/>
    <property type="match status" value="1"/>
</dbReference>
<dbReference type="CDD" id="cd00190">
    <property type="entry name" value="Tryp_SPc"/>
    <property type="match status" value="1"/>
</dbReference>
<dbReference type="FunFam" id="2.10.25.10:FF:000419">
    <property type="entry name" value="Complement C1r subcomponent"/>
    <property type="match status" value="1"/>
</dbReference>
<dbReference type="FunFam" id="2.10.70.10:FF:000040">
    <property type="entry name" value="Complement C1r subcomponent"/>
    <property type="match status" value="1"/>
</dbReference>
<dbReference type="FunFam" id="2.40.10.10:FF:000035">
    <property type="entry name" value="Complement C1r subcomponent"/>
    <property type="match status" value="1"/>
</dbReference>
<dbReference type="FunFam" id="2.60.120.290:FF:000028">
    <property type="entry name" value="Complement C1r subcomponent"/>
    <property type="match status" value="1"/>
</dbReference>
<dbReference type="FunFam" id="2.40.10.10:FF:000159">
    <property type="entry name" value="Complement C1r subcomponent like"/>
    <property type="match status" value="1"/>
</dbReference>
<dbReference type="FunFam" id="2.10.70.10:FF:000016">
    <property type="entry name" value="Mannan-binding lectin serine protease 1"/>
    <property type="match status" value="1"/>
</dbReference>
<dbReference type="FunFam" id="2.60.120.290:FF:000006">
    <property type="entry name" value="Mannan-binding lectin serine protease 1"/>
    <property type="match status" value="1"/>
</dbReference>
<dbReference type="Gene3D" id="2.10.70.10">
    <property type="entry name" value="Complement Module, domain 1"/>
    <property type="match status" value="2"/>
</dbReference>
<dbReference type="Gene3D" id="2.10.25.10">
    <property type="entry name" value="Laminin"/>
    <property type="match status" value="1"/>
</dbReference>
<dbReference type="Gene3D" id="2.60.120.290">
    <property type="entry name" value="Spermadhesin, CUB domain"/>
    <property type="match status" value="2"/>
</dbReference>
<dbReference type="Gene3D" id="2.40.10.10">
    <property type="entry name" value="Trypsin-like serine proteases"/>
    <property type="match status" value="3"/>
</dbReference>
<dbReference type="InterPro" id="IPR000859">
    <property type="entry name" value="CUB_dom"/>
</dbReference>
<dbReference type="InterPro" id="IPR001881">
    <property type="entry name" value="EGF-like_Ca-bd_dom"/>
</dbReference>
<dbReference type="InterPro" id="IPR000742">
    <property type="entry name" value="EGF-like_dom"/>
</dbReference>
<dbReference type="InterPro" id="IPR018097">
    <property type="entry name" value="EGF_Ca-bd_CS"/>
</dbReference>
<dbReference type="InterPro" id="IPR024175">
    <property type="entry name" value="Pept_S1A_C1r/C1S/mannan-bd"/>
</dbReference>
<dbReference type="InterPro" id="IPR009003">
    <property type="entry name" value="Peptidase_S1_PA"/>
</dbReference>
<dbReference type="InterPro" id="IPR043504">
    <property type="entry name" value="Peptidase_S1_PA_chymotrypsin"/>
</dbReference>
<dbReference type="InterPro" id="IPR001314">
    <property type="entry name" value="Peptidase_S1A"/>
</dbReference>
<dbReference type="InterPro" id="IPR035914">
    <property type="entry name" value="Sperma_CUB_dom_sf"/>
</dbReference>
<dbReference type="InterPro" id="IPR035976">
    <property type="entry name" value="Sushi/SCR/CCP_sf"/>
</dbReference>
<dbReference type="InterPro" id="IPR000436">
    <property type="entry name" value="Sushi_SCR_CCP_dom"/>
</dbReference>
<dbReference type="InterPro" id="IPR001254">
    <property type="entry name" value="Trypsin_dom"/>
</dbReference>
<dbReference type="InterPro" id="IPR033116">
    <property type="entry name" value="TRYPSIN_SER"/>
</dbReference>
<dbReference type="PANTHER" id="PTHR24255:SF25">
    <property type="entry name" value="COMPLEMENT C1R SUBCOMPONENT"/>
    <property type="match status" value="1"/>
</dbReference>
<dbReference type="PANTHER" id="PTHR24255">
    <property type="entry name" value="COMPLEMENT COMPONENT 1, S SUBCOMPONENT-RELATED"/>
    <property type="match status" value="1"/>
</dbReference>
<dbReference type="Pfam" id="PF00431">
    <property type="entry name" value="CUB"/>
    <property type="match status" value="2"/>
</dbReference>
<dbReference type="Pfam" id="PF14670">
    <property type="entry name" value="FXa_inhibition"/>
    <property type="match status" value="1"/>
</dbReference>
<dbReference type="Pfam" id="PF00084">
    <property type="entry name" value="Sushi"/>
    <property type="match status" value="2"/>
</dbReference>
<dbReference type="Pfam" id="PF00089">
    <property type="entry name" value="Trypsin"/>
    <property type="match status" value="1"/>
</dbReference>
<dbReference type="PIRSF" id="PIRSF001155">
    <property type="entry name" value="C1r_C1s_MASP"/>
    <property type="match status" value="1"/>
</dbReference>
<dbReference type="PRINTS" id="PR00722">
    <property type="entry name" value="CHYMOTRYPSIN"/>
</dbReference>
<dbReference type="SMART" id="SM00032">
    <property type="entry name" value="CCP"/>
    <property type="match status" value="2"/>
</dbReference>
<dbReference type="SMART" id="SM00042">
    <property type="entry name" value="CUB"/>
    <property type="match status" value="2"/>
</dbReference>
<dbReference type="SMART" id="SM00181">
    <property type="entry name" value="EGF"/>
    <property type="match status" value="1"/>
</dbReference>
<dbReference type="SMART" id="SM00179">
    <property type="entry name" value="EGF_CA"/>
    <property type="match status" value="1"/>
</dbReference>
<dbReference type="SMART" id="SM00020">
    <property type="entry name" value="Tryp_SPc"/>
    <property type="match status" value="1"/>
</dbReference>
<dbReference type="SUPFAM" id="SSF57535">
    <property type="entry name" value="Complement control module/SCR domain"/>
    <property type="match status" value="2"/>
</dbReference>
<dbReference type="SUPFAM" id="SSF57196">
    <property type="entry name" value="EGF/Laminin"/>
    <property type="match status" value="1"/>
</dbReference>
<dbReference type="SUPFAM" id="SSF49854">
    <property type="entry name" value="Spermadhesin, CUB domain"/>
    <property type="match status" value="2"/>
</dbReference>
<dbReference type="SUPFAM" id="SSF50494">
    <property type="entry name" value="Trypsin-like serine proteases"/>
    <property type="match status" value="1"/>
</dbReference>
<dbReference type="PROSITE" id="PS00010">
    <property type="entry name" value="ASX_HYDROXYL"/>
    <property type="match status" value="1"/>
</dbReference>
<dbReference type="PROSITE" id="PS01180">
    <property type="entry name" value="CUB"/>
    <property type="match status" value="2"/>
</dbReference>
<dbReference type="PROSITE" id="PS01186">
    <property type="entry name" value="EGF_2"/>
    <property type="match status" value="1"/>
</dbReference>
<dbReference type="PROSITE" id="PS01187">
    <property type="entry name" value="EGF_CA"/>
    <property type="match status" value="1"/>
</dbReference>
<dbReference type="PROSITE" id="PS50923">
    <property type="entry name" value="SUSHI"/>
    <property type="match status" value="2"/>
</dbReference>
<dbReference type="PROSITE" id="PS50240">
    <property type="entry name" value="TRYPSIN_DOM"/>
    <property type="match status" value="1"/>
</dbReference>
<dbReference type="PROSITE" id="PS00135">
    <property type="entry name" value="TRYPSIN_SER"/>
    <property type="match status" value="1"/>
</dbReference>
<gene>
    <name type="primary">C1rb</name>
    <name type="synonym">C1r</name>
</gene>
<organism>
    <name type="scientific">Mus musculus</name>
    <name type="common">Mouse</name>
    <dbReference type="NCBI Taxonomy" id="10090"/>
    <lineage>
        <taxon>Eukaryota</taxon>
        <taxon>Metazoa</taxon>
        <taxon>Chordata</taxon>
        <taxon>Craniata</taxon>
        <taxon>Vertebrata</taxon>
        <taxon>Euteleostomi</taxon>
        <taxon>Mammalia</taxon>
        <taxon>Eutheria</taxon>
        <taxon>Euarchontoglires</taxon>
        <taxon>Glires</taxon>
        <taxon>Rodentia</taxon>
        <taxon>Myomorpha</taxon>
        <taxon>Muroidea</taxon>
        <taxon>Muridae</taxon>
        <taxon>Murinae</taxon>
        <taxon>Mus</taxon>
        <taxon>Mus</taxon>
    </lineage>
</organism>
<comment type="function">
    <text evidence="1">Serine protease component of the complement C1 complex, a multiprotein complex that initiates the classical pathway of the complement system, a cascade of proteins that leads to phagocytosis and breakdown of pathogens and signaling that strengthens the adaptive immune system. C1R catalyzes the first enzymatic step in the classical complement pathway: it is activated by the C1Q subcomplex of the C1 complex, which associates with IgG or IgM immunoglobulins complexed with antigens to form antigen-antibody complexes on the surface of pathogens. Immunoglobulin-binding promotes the autocatalytic cleavage and activation of C1R. Activated C1R then cleaves and activates C1S, the second protease of the classical complement pathway. It is unclear if C1R activates C1S within single, strained C1 complexes or between neighboring C1 complexes on surfaces.</text>
</comment>
<comment type="catalytic activity">
    <reaction evidence="1">
        <text>Selective cleavage of Lys(or Arg)-|-Ile bond in complement subcomponent C1s to form the active form of C1s (EC 3.4.21.42).</text>
        <dbReference type="EC" id="3.4.21.41"/>
    </reaction>
</comment>
<comment type="activity regulation">
    <text evidence="1">Activated by the C1Q subcomplex of the C1 complex following C1Q binding to immunoglobulins (IgG or IgM) complexed with antigens to form antigen-antibody complexes on the surface of pathogens. Immunoglobulin-binding promotes autoactivation of C1R, which results in the cleavage of the Arg-Ile bond in the catalytic domain.</text>
</comment>
<comment type="subunit">
    <text evidence="1">Core component of the complement C1 complex, a calcium-dependent complex composed of 1 molecule of the C1Q subcomplex, 2 molecules of C1R and 2 molecules of C1S. The C1Q subcomplex is composed 18 subunits: 3 chains of C1QA, C1QB, and C1QC trimerize to form 6 collagen-like triple helices connected to six globular ligand-recognition modules. Within the C1 complex, C1R is a dimer of identical chains, each of which is activated by cleavage into two chains, heavy and light, connected by disulfide bonds.</text>
</comment>
<comment type="subcellular location">
    <subcellularLocation>
        <location evidence="1">Secreted</location>
    </subcellularLocation>
    <subcellularLocation>
        <location evidence="1">Cell surface</location>
    </subcellularLocation>
    <text evidence="1">Recruited to the surface of pathogens by the C1Q subcomplex.</text>
</comment>
<comment type="domain">
    <text evidence="1">The CUB domain 2 shows a compact folded structure in the presence of Ca(2+), whereas it has a flexible, disordered conformation in the absence of Ca(2+). Ca(2+) could provide a switch between the folded and disordered forms; low Ca(2+) could provide flexibility to promote autoprocessing and activation of CIR.</text>
</comment>
<comment type="PTM">
    <text evidence="1">Cleaved and activated by autocatalytic processing to generate Complement C1r subcomponent heavy and light chains that are connected by disulfide bonds.</text>
</comment>
<comment type="PTM">
    <text evidence="1">The iron and 2-oxoglutarate dependent 3-hydroxylation of aspartate and asparagine is (R) stereospecific within EGF domains.</text>
</comment>
<comment type="similarity">
    <text evidence="4">Belongs to the peptidase S1 family.</text>
</comment>
<feature type="signal peptide" evidence="1">
    <location>
        <begin position="1"/>
        <end position="16"/>
    </location>
</feature>
<feature type="chain" id="PRO_0000042187" description="Complement C1r-B subcomponent">
    <location>
        <begin position="17"/>
        <end position="706"/>
    </location>
</feature>
<feature type="chain" id="PRO_0000042188" description="Complement C1r-B subcomponent heavy chain" evidence="1">
    <location>
        <begin position="17"/>
        <end position="462"/>
    </location>
</feature>
<feature type="chain" id="PRO_0000042189" description="Complement C1r-B subcomponent light chain" evidence="1">
    <location>
        <begin position="463"/>
        <end position="706"/>
    </location>
</feature>
<feature type="domain" description="CUB 1" evidence="3">
    <location>
        <begin position="17"/>
        <end position="140"/>
    </location>
</feature>
<feature type="domain" description="EGF-like; calcium-binding" evidence="2">
    <location>
        <begin position="141"/>
        <end position="189"/>
    </location>
</feature>
<feature type="domain" description="CUB 2" evidence="3">
    <location>
        <begin position="192"/>
        <end position="304"/>
    </location>
</feature>
<feature type="domain" description="Sushi 1" evidence="5">
    <location>
        <begin position="306"/>
        <end position="372"/>
    </location>
</feature>
<feature type="domain" description="Sushi 2" evidence="5">
    <location>
        <begin position="373"/>
        <end position="448"/>
    </location>
</feature>
<feature type="domain" description="Peptidase S1" evidence="4">
    <location>
        <begin position="463"/>
        <end position="703"/>
    </location>
</feature>
<feature type="active site" description="Charge relay system" evidence="1">
    <location>
        <position position="501"/>
    </location>
</feature>
<feature type="active site" description="Charge relay system" evidence="1">
    <location>
        <position position="558"/>
    </location>
</feature>
<feature type="active site" description="Charge relay system" evidence="1">
    <location>
        <position position="655"/>
    </location>
</feature>
<feature type="binding site" evidence="1">
    <location>
        <position position="65"/>
    </location>
    <ligand>
        <name>Ca(2+)</name>
        <dbReference type="ChEBI" id="CHEBI:29108"/>
        <label>1</label>
    </ligand>
</feature>
<feature type="binding site" evidence="1">
    <location>
        <position position="73"/>
    </location>
    <ligand>
        <name>Ca(2+)</name>
        <dbReference type="ChEBI" id="CHEBI:29108"/>
        <label>1</label>
    </ligand>
</feature>
<feature type="binding site" evidence="1">
    <location>
        <position position="118"/>
    </location>
    <ligand>
        <name>Ca(2+)</name>
        <dbReference type="ChEBI" id="CHEBI:29108"/>
        <label>1</label>
    </ligand>
</feature>
<feature type="binding site" evidence="1">
    <location>
        <position position="141"/>
    </location>
    <ligand>
        <name>Ca(2+)</name>
        <dbReference type="ChEBI" id="CHEBI:29108"/>
        <label>2</label>
    </ligand>
</feature>
<feature type="binding site" evidence="1">
    <location>
        <position position="142"/>
    </location>
    <ligand>
        <name>Ca(2+)</name>
        <dbReference type="ChEBI" id="CHEBI:29108"/>
        <label>2</label>
    </ligand>
</feature>
<feature type="binding site" evidence="1">
    <location>
        <position position="144"/>
    </location>
    <ligand>
        <name>Ca(2+)</name>
        <dbReference type="ChEBI" id="CHEBI:29108"/>
        <label>2</label>
    </ligand>
</feature>
<feature type="binding site" evidence="1">
    <location>
        <position position="166"/>
    </location>
    <ligand>
        <name>Ca(2+)</name>
        <dbReference type="ChEBI" id="CHEBI:29108"/>
        <label>2</label>
    </ligand>
</feature>
<feature type="binding site" evidence="1">
    <location>
        <position position="167"/>
    </location>
    <ligand>
        <name>Ca(2+)</name>
        <dbReference type="ChEBI" id="CHEBI:29108"/>
        <label>2</label>
    </ligand>
</feature>
<feature type="binding site" evidence="1">
    <location>
        <position position="170"/>
    </location>
    <ligand>
        <name>Ca(2+)</name>
        <dbReference type="ChEBI" id="CHEBI:29108"/>
        <label>2</label>
    </ligand>
</feature>
<feature type="binding site" evidence="1">
    <location>
        <position position="242"/>
    </location>
    <ligand>
        <name>Ca(2+)</name>
        <dbReference type="ChEBI" id="CHEBI:29108"/>
        <label>3</label>
    </ligand>
</feature>
<feature type="binding site" evidence="1">
    <location>
        <position position="252"/>
    </location>
    <ligand>
        <name>Ca(2+)</name>
        <dbReference type="ChEBI" id="CHEBI:29108"/>
        <label>3</label>
    </ligand>
</feature>
<feature type="binding site" evidence="1">
    <location>
        <position position="289"/>
    </location>
    <ligand>
        <name>Ca(2+)</name>
        <dbReference type="ChEBI" id="CHEBI:29108"/>
        <label>3</label>
    </ligand>
</feature>
<feature type="binding site" evidence="1">
    <location>
        <position position="293"/>
    </location>
    <ligand>
        <name>Ca(2+)</name>
        <dbReference type="ChEBI" id="CHEBI:29108"/>
        <label>3</label>
    </ligand>
</feature>
<feature type="site" description="Cleavage; by autolysis" evidence="1">
    <location>
        <begin position="462"/>
        <end position="463"/>
    </location>
</feature>
<feature type="modified residue" description="(3R)-3-hydroxyasparagine" evidence="1">
    <location>
        <position position="166"/>
    </location>
</feature>
<feature type="modified residue" description="Phosphoserine; by CK2" evidence="1">
    <location>
        <position position="205"/>
    </location>
</feature>
<feature type="glycosylation site" description="N-linked (GlcNAc...) asparagine" evidence="2">
    <location>
        <position position="124"/>
    </location>
</feature>
<feature type="glycosylation site" description="N-linked (GlcNAc...) asparagine" evidence="2">
    <location>
        <position position="220"/>
    </location>
</feature>
<feature type="glycosylation site" description="N-linked (GlcNAc...) asparagine" evidence="2">
    <location>
        <position position="582"/>
    </location>
</feature>
<feature type="disulfide bond" evidence="1">
    <location>
        <begin position="70"/>
        <end position="88"/>
    </location>
</feature>
<feature type="disulfide bond" evidence="1">
    <location>
        <begin position="145"/>
        <end position="164"/>
    </location>
</feature>
<feature type="disulfide bond" evidence="1">
    <location>
        <begin position="160"/>
        <end position="173"/>
    </location>
</feature>
<feature type="disulfide bond" evidence="1">
    <location>
        <begin position="175"/>
        <end position="188"/>
    </location>
</feature>
<feature type="disulfide bond" evidence="1">
    <location>
        <begin position="192"/>
        <end position="219"/>
    </location>
</feature>
<feature type="disulfide bond" evidence="1">
    <location>
        <begin position="249"/>
        <end position="267"/>
    </location>
</feature>
<feature type="disulfide bond" evidence="1">
    <location>
        <begin position="308"/>
        <end position="357"/>
    </location>
</feature>
<feature type="disulfide bond" evidence="1">
    <location>
        <begin position="337"/>
        <end position="370"/>
    </location>
</feature>
<feature type="disulfide bond" evidence="1">
    <location>
        <begin position="375"/>
        <end position="428"/>
    </location>
</feature>
<feature type="disulfide bond" evidence="1">
    <location>
        <begin position="405"/>
        <end position="446"/>
    </location>
</feature>
<feature type="disulfide bond" description="Interchain (between heavy and light chains)" evidence="3 4 5">
    <location>
        <begin position="450"/>
        <end position="578"/>
    </location>
</feature>
<feature type="disulfide bond" evidence="1">
    <location>
        <begin position="621"/>
        <end position="640"/>
    </location>
</feature>
<feature type="disulfide bond" evidence="1">
    <location>
        <begin position="651"/>
        <end position="681"/>
    </location>
</feature>
<evidence type="ECO:0000250" key="1">
    <source>
        <dbReference type="UniProtKB" id="P00736"/>
    </source>
</evidence>
<evidence type="ECO:0000255" key="2"/>
<evidence type="ECO:0000255" key="3">
    <source>
        <dbReference type="PROSITE-ProRule" id="PRU00059"/>
    </source>
</evidence>
<evidence type="ECO:0000255" key="4">
    <source>
        <dbReference type="PROSITE-ProRule" id="PRU00274"/>
    </source>
</evidence>
<evidence type="ECO:0000255" key="5">
    <source>
        <dbReference type="PROSITE-ProRule" id="PRU00302"/>
    </source>
</evidence>
<accession>Q8CFG9</accession>
<reference key="1">
    <citation type="journal article" date="2003" name="Biochem. J.">
        <title>Complement C1r and C1s genes are duplicated in the mouse: differential expression generates alternative isomorphs in the liver and in the male reproductive system.</title>
        <authorList>
            <person name="Garnier G."/>
            <person name="Circolo A."/>
            <person name="Xu Y."/>
            <person name="Volanakis J.E."/>
        </authorList>
    </citation>
    <scope>NUCLEOTIDE SEQUENCE [MRNA]</scope>
    <scope>TISSUE SPECIFICITY</scope>
    <source>
        <strain>C57BL/6J</strain>
    </source>
</reference>